<protein>
    <recommendedName>
        <fullName evidence="1">Arginine biosynthesis bifunctional protein ArgJ</fullName>
    </recommendedName>
    <domain>
        <recommendedName>
            <fullName evidence="1">Glutamate N-acetyltransferase</fullName>
            <ecNumber evidence="1">2.3.1.35</ecNumber>
        </recommendedName>
        <alternativeName>
            <fullName evidence="1">Ornithine acetyltransferase</fullName>
            <shortName evidence="1">OATase</shortName>
        </alternativeName>
        <alternativeName>
            <fullName evidence="1">Ornithine transacetylase</fullName>
        </alternativeName>
    </domain>
    <domain>
        <recommendedName>
            <fullName evidence="1">Amino-acid acetyltransferase</fullName>
            <ecNumber evidence="1">2.3.1.1</ecNumber>
        </recommendedName>
        <alternativeName>
            <fullName evidence="1">N-acetylglutamate synthase</fullName>
            <shortName evidence="1">AGSase</shortName>
        </alternativeName>
    </domain>
    <component>
        <recommendedName>
            <fullName evidence="1">Arginine biosynthesis bifunctional protein ArgJ alpha chain</fullName>
        </recommendedName>
    </component>
    <component>
        <recommendedName>
            <fullName evidence="1">Arginine biosynthesis bifunctional protein ArgJ beta chain</fullName>
        </recommendedName>
    </component>
</protein>
<feature type="chain" id="PRO_0000002125" description="Arginine biosynthesis bifunctional protein ArgJ alpha chain" evidence="1">
    <location>
        <begin position="1"/>
        <end position="194"/>
    </location>
</feature>
<feature type="chain" id="PRO_0000002126" description="Arginine biosynthesis bifunctional protein ArgJ beta chain" evidence="1">
    <location>
        <begin position="195"/>
        <end position="412"/>
    </location>
</feature>
<feature type="active site" description="Nucleophile" evidence="1">
    <location>
        <position position="195"/>
    </location>
</feature>
<feature type="binding site" evidence="1">
    <location>
        <position position="158"/>
    </location>
    <ligand>
        <name>substrate</name>
    </ligand>
</feature>
<feature type="binding site" evidence="1">
    <location>
        <position position="184"/>
    </location>
    <ligand>
        <name>substrate</name>
    </ligand>
</feature>
<feature type="binding site" evidence="1">
    <location>
        <position position="195"/>
    </location>
    <ligand>
        <name>substrate</name>
    </ligand>
</feature>
<feature type="binding site" evidence="1">
    <location>
        <position position="284"/>
    </location>
    <ligand>
        <name>substrate</name>
    </ligand>
</feature>
<feature type="binding site" evidence="1">
    <location>
        <position position="407"/>
    </location>
    <ligand>
        <name>substrate</name>
    </ligand>
</feature>
<feature type="binding site" evidence="1">
    <location>
        <position position="412"/>
    </location>
    <ligand>
        <name>substrate</name>
    </ligand>
</feature>
<feature type="site" description="Involved in the stabilization of negative charge on the oxyanion by the formation of the oxyanion hole" evidence="1">
    <location>
        <position position="121"/>
    </location>
</feature>
<feature type="site" description="Involved in the stabilization of negative charge on the oxyanion by the formation of the oxyanion hole" evidence="1">
    <location>
        <position position="122"/>
    </location>
</feature>
<feature type="site" description="Cleavage; by autolysis" evidence="1">
    <location>
        <begin position="194"/>
        <end position="195"/>
    </location>
</feature>
<sequence length="412" mass="43654">MALKISPLSPQNIQELPPLSGVRIATAEAGIRDKGRTDLLFIVFDAPTSVAGVFTRSKCPSASVDHCRASLSHGVARGVVVNSGNANAFTGRKGKQTADAILHAAASALKVKENEIFIASTGVIGEPLEASSIVNLLPSMAETAEEGNWLEAARAIMTTDTFPKLATRKFYCGGKTVTINGIAKGAGMIAPDMATMLSFVVSDAAISSDILQSMLSEAVQGSFNSITVDSDTSTSDTLMMFATGKVKGNFPCFTSKSDPCYEVFSRQLSALLHELALQVVCDGEGARHLIEVCVTGATTENAAKTIALSIANSPLVKTAIAGEDANWGRVVMAVGKAGVEVDRDLLTIWFGEHRLAINGERDPDYHEEAISAYMRGKHITIRVDIGLGSGKATVWSCDLTKEYVMINGDYRS</sequence>
<proteinExistence type="inferred from homology"/>
<evidence type="ECO:0000255" key="1">
    <source>
        <dbReference type="HAMAP-Rule" id="MF_01106"/>
    </source>
</evidence>
<name>ARGJ_BARQU</name>
<keyword id="KW-0012">Acyltransferase</keyword>
<keyword id="KW-0028">Amino-acid biosynthesis</keyword>
<keyword id="KW-0055">Arginine biosynthesis</keyword>
<keyword id="KW-0068">Autocatalytic cleavage</keyword>
<keyword id="KW-0963">Cytoplasm</keyword>
<keyword id="KW-0511">Multifunctional enzyme</keyword>
<keyword id="KW-0808">Transferase</keyword>
<gene>
    <name evidence="1" type="primary">argJ</name>
    <name type="ordered locus">BQ01890</name>
</gene>
<organism>
    <name type="scientific">Bartonella quintana (strain Toulouse)</name>
    <name type="common">Rochalimaea quintana</name>
    <dbReference type="NCBI Taxonomy" id="283165"/>
    <lineage>
        <taxon>Bacteria</taxon>
        <taxon>Pseudomonadati</taxon>
        <taxon>Pseudomonadota</taxon>
        <taxon>Alphaproteobacteria</taxon>
        <taxon>Hyphomicrobiales</taxon>
        <taxon>Bartonellaceae</taxon>
        <taxon>Bartonella</taxon>
    </lineage>
</organism>
<accession>Q6G0Q6</accession>
<reference key="1">
    <citation type="journal article" date="2004" name="Proc. Natl. Acad. Sci. U.S.A.">
        <title>The louse-borne human pathogen Bartonella quintana is a genomic derivative of the zoonotic agent Bartonella henselae.</title>
        <authorList>
            <person name="Alsmark U.C.M."/>
            <person name="Frank A.C."/>
            <person name="Karlberg E.O."/>
            <person name="Legault B.-A."/>
            <person name="Ardell D.H."/>
            <person name="Canbaeck B."/>
            <person name="Eriksson A.-S."/>
            <person name="Naeslund A.K."/>
            <person name="Handley S.A."/>
            <person name="Huvet M."/>
            <person name="La Scola B."/>
            <person name="Holmberg M."/>
            <person name="Andersson S.G.E."/>
        </authorList>
    </citation>
    <scope>NUCLEOTIDE SEQUENCE [LARGE SCALE GENOMIC DNA]</scope>
    <source>
        <strain>Toulouse</strain>
    </source>
</reference>
<comment type="function">
    <text evidence="1">Catalyzes two activities which are involved in the cyclic version of arginine biosynthesis: the synthesis of N-acetylglutamate from glutamate and acetyl-CoA as the acetyl donor, and of ornithine by transacetylation between N(2)-acetylornithine and glutamate.</text>
</comment>
<comment type="catalytic activity">
    <reaction evidence="1">
        <text>N(2)-acetyl-L-ornithine + L-glutamate = N-acetyl-L-glutamate + L-ornithine</text>
        <dbReference type="Rhea" id="RHEA:15349"/>
        <dbReference type="ChEBI" id="CHEBI:29985"/>
        <dbReference type="ChEBI" id="CHEBI:44337"/>
        <dbReference type="ChEBI" id="CHEBI:46911"/>
        <dbReference type="ChEBI" id="CHEBI:57805"/>
        <dbReference type="EC" id="2.3.1.35"/>
    </reaction>
</comment>
<comment type="catalytic activity">
    <reaction evidence="1">
        <text>L-glutamate + acetyl-CoA = N-acetyl-L-glutamate + CoA + H(+)</text>
        <dbReference type="Rhea" id="RHEA:24292"/>
        <dbReference type="ChEBI" id="CHEBI:15378"/>
        <dbReference type="ChEBI" id="CHEBI:29985"/>
        <dbReference type="ChEBI" id="CHEBI:44337"/>
        <dbReference type="ChEBI" id="CHEBI:57287"/>
        <dbReference type="ChEBI" id="CHEBI:57288"/>
        <dbReference type="EC" id="2.3.1.1"/>
    </reaction>
</comment>
<comment type="pathway">
    <text evidence="1">Amino-acid biosynthesis; L-arginine biosynthesis; L-ornithine and N-acetyl-L-glutamate from L-glutamate and N(2)-acetyl-L-ornithine (cyclic): step 1/1.</text>
</comment>
<comment type="pathway">
    <text evidence="1">Amino-acid biosynthesis; L-arginine biosynthesis; N(2)-acetyl-L-ornithine from L-glutamate: step 1/4.</text>
</comment>
<comment type="subunit">
    <text evidence="1">Heterotetramer of two alpha and two beta chains.</text>
</comment>
<comment type="subcellular location">
    <subcellularLocation>
        <location evidence="1">Cytoplasm</location>
    </subcellularLocation>
</comment>
<comment type="similarity">
    <text evidence="1">Belongs to the ArgJ family.</text>
</comment>
<dbReference type="EC" id="2.3.1.35" evidence="1"/>
<dbReference type="EC" id="2.3.1.1" evidence="1"/>
<dbReference type="EMBL" id="BX897700">
    <property type="protein sequence ID" value="CAF25692.1"/>
    <property type="molecule type" value="Genomic_DNA"/>
</dbReference>
<dbReference type="RefSeq" id="WP_011179007.1">
    <property type="nucleotide sequence ID" value="NC_005955.1"/>
</dbReference>
<dbReference type="SMR" id="Q6G0Q6"/>
<dbReference type="MEROPS" id="T05.001"/>
<dbReference type="KEGG" id="bqu:BQ01890"/>
<dbReference type="eggNOG" id="COG1364">
    <property type="taxonomic scope" value="Bacteria"/>
</dbReference>
<dbReference type="HOGENOM" id="CLU_027172_1_0_5"/>
<dbReference type="OrthoDB" id="9804242at2"/>
<dbReference type="UniPathway" id="UPA00068">
    <property type="reaction ID" value="UER00106"/>
</dbReference>
<dbReference type="UniPathway" id="UPA00068">
    <property type="reaction ID" value="UER00111"/>
</dbReference>
<dbReference type="Proteomes" id="UP000000597">
    <property type="component" value="Chromosome"/>
</dbReference>
<dbReference type="GO" id="GO:0005737">
    <property type="term" value="C:cytoplasm"/>
    <property type="evidence" value="ECO:0007669"/>
    <property type="project" value="UniProtKB-SubCell"/>
</dbReference>
<dbReference type="GO" id="GO:0004358">
    <property type="term" value="F:glutamate N-acetyltransferase activity"/>
    <property type="evidence" value="ECO:0007669"/>
    <property type="project" value="UniProtKB-UniRule"/>
</dbReference>
<dbReference type="GO" id="GO:0004042">
    <property type="term" value="F:L-glutamate N-acetyltransferase activity"/>
    <property type="evidence" value="ECO:0007669"/>
    <property type="project" value="UniProtKB-UniRule"/>
</dbReference>
<dbReference type="GO" id="GO:0006526">
    <property type="term" value="P:L-arginine biosynthetic process"/>
    <property type="evidence" value="ECO:0007669"/>
    <property type="project" value="UniProtKB-UniRule"/>
</dbReference>
<dbReference type="GO" id="GO:0006592">
    <property type="term" value="P:ornithine biosynthetic process"/>
    <property type="evidence" value="ECO:0007669"/>
    <property type="project" value="TreeGrafter"/>
</dbReference>
<dbReference type="CDD" id="cd02152">
    <property type="entry name" value="OAT"/>
    <property type="match status" value="1"/>
</dbReference>
<dbReference type="FunFam" id="3.10.20.340:FF:000003">
    <property type="entry name" value="Arginine biosynthesis bifunctional protein ArgJ"/>
    <property type="match status" value="1"/>
</dbReference>
<dbReference type="FunFam" id="3.60.70.12:FF:000001">
    <property type="entry name" value="Arginine biosynthesis bifunctional protein ArgJ, chloroplastic"/>
    <property type="match status" value="1"/>
</dbReference>
<dbReference type="Gene3D" id="3.10.20.340">
    <property type="entry name" value="ArgJ beta chain, C-terminal domain"/>
    <property type="match status" value="1"/>
</dbReference>
<dbReference type="Gene3D" id="3.60.70.12">
    <property type="entry name" value="L-amino peptidase D-ALA esterase/amidase"/>
    <property type="match status" value="1"/>
</dbReference>
<dbReference type="HAMAP" id="MF_01106">
    <property type="entry name" value="ArgJ"/>
    <property type="match status" value="1"/>
</dbReference>
<dbReference type="InterPro" id="IPR002813">
    <property type="entry name" value="Arg_biosynth_ArgJ"/>
</dbReference>
<dbReference type="InterPro" id="IPR016117">
    <property type="entry name" value="ArgJ-like_dom_sf"/>
</dbReference>
<dbReference type="InterPro" id="IPR042195">
    <property type="entry name" value="ArgJ_beta_C"/>
</dbReference>
<dbReference type="NCBIfam" id="TIGR00120">
    <property type="entry name" value="ArgJ"/>
    <property type="match status" value="1"/>
</dbReference>
<dbReference type="NCBIfam" id="NF003802">
    <property type="entry name" value="PRK05388.1"/>
    <property type="match status" value="1"/>
</dbReference>
<dbReference type="PANTHER" id="PTHR23100">
    <property type="entry name" value="ARGININE BIOSYNTHESIS BIFUNCTIONAL PROTEIN ARGJ"/>
    <property type="match status" value="1"/>
</dbReference>
<dbReference type="PANTHER" id="PTHR23100:SF0">
    <property type="entry name" value="ARGININE BIOSYNTHESIS BIFUNCTIONAL PROTEIN ARGJ, MITOCHONDRIAL"/>
    <property type="match status" value="1"/>
</dbReference>
<dbReference type="Pfam" id="PF01960">
    <property type="entry name" value="ArgJ"/>
    <property type="match status" value="1"/>
</dbReference>
<dbReference type="SUPFAM" id="SSF56266">
    <property type="entry name" value="DmpA/ArgJ-like"/>
    <property type="match status" value="1"/>
</dbReference>